<comment type="function">
    <text evidence="1">Inactive GDP-bound Rho GTPases reside in the cytosol, are found in a complex with Rho GDP-dissociation inhibitors (Rho GDIs), and are released from the GDI protein in order to translocate to membranes upon activation.</text>
</comment>
<comment type="subcellular location">
    <subcellularLocation>
        <location evidence="1">Cytoplasm</location>
    </subcellularLocation>
    <subcellularLocation>
        <location evidence="1">Membrane</location>
        <topology evidence="1">Peripheral membrane protein</topology>
    </subcellularLocation>
    <text>Associated with the membrane when activated.</text>
</comment>
<comment type="similarity">
    <text evidence="3">Belongs to the small GTPase superfamily. Rho family.</text>
</comment>
<organism>
    <name type="scientific">Oryza sativa subsp. japonica</name>
    <name type="common">Rice</name>
    <dbReference type="NCBI Taxonomy" id="39947"/>
    <lineage>
        <taxon>Eukaryota</taxon>
        <taxon>Viridiplantae</taxon>
        <taxon>Streptophyta</taxon>
        <taxon>Embryophyta</taxon>
        <taxon>Tracheophyta</taxon>
        <taxon>Spermatophyta</taxon>
        <taxon>Magnoliopsida</taxon>
        <taxon>Liliopsida</taxon>
        <taxon>Poales</taxon>
        <taxon>Poaceae</taxon>
        <taxon>BOP clade</taxon>
        <taxon>Oryzoideae</taxon>
        <taxon>Oryzeae</taxon>
        <taxon>Oryzinae</taxon>
        <taxon>Oryza</taxon>
        <taxon>Oryza sativa</taxon>
    </lineage>
</organism>
<name>RAC6_ORYSJ</name>
<feature type="chain" id="PRO_0000227576" description="Rac-like GTP-binding protein 6">
    <location>
        <begin position="1"/>
        <end position="194"/>
    </location>
</feature>
<feature type="propeptide" id="PRO_0000227577" description="Removed in mature form" evidence="2">
    <location>
        <begin position="195"/>
        <end position="197"/>
    </location>
</feature>
<feature type="short sequence motif" description="Effector region" evidence="2">
    <location>
        <begin position="35"/>
        <end position="43"/>
    </location>
</feature>
<feature type="binding site" evidence="1">
    <location>
        <begin position="13"/>
        <end position="20"/>
    </location>
    <ligand>
        <name>GTP</name>
        <dbReference type="ChEBI" id="CHEBI:37565"/>
    </ligand>
</feature>
<feature type="binding site" evidence="1">
    <location>
        <begin position="60"/>
        <end position="64"/>
    </location>
    <ligand>
        <name>GTP</name>
        <dbReference type="ChEBI" id="CHEBI:37565"/>
    </ligand>
</feature>
<feature type="binding site" evidence="1">
    <location>
        <begin position="118"/>
        <end position="121"/>
    </location>
    <ligand>
        <name>GTP</name>
        <dbReference type="ChEBI" id="CHEBI:37565"/>
    </ligand>
</feature>
<feature type="modified residue" description="Cysteine methyl ester" evidence="2">
    <location>
        <position position="194"/>
    </location>
</feature>
<feature type="lipid moiety-binding region" description="S-geranylgeranyl cysteine" evidence="2">
    <location>
        <position position="194"/>
    </location>
</feature>
<sequence>MSASRFIKCVTVGDGAVGKTCMLISYTSNTFPTDYVPTVFDNFSANVVVDGNTVNLGLWDTAGQEDYNRLRPLSYRGADVFLLAFSLISKASYENVSKKWIPELKHYAPGVPIILVGTKLDLRDDKQFFVDHPGAVPITTAQGEELRKQIGAPYYIECSSKTQLNVKGVFDAAIKVVLQPPKAKKKKKAQRGACSIL</sequence>
<protein>
    <recommendedName>
        <fullName>Rac-like GTP-binding protein 6</fullName>
    </recommendedName>
    <alternativeName>
        <fullName>GTPase protein RacB</fullName>
    </alternativeName>
    <alternativeName>
        <fullName>OsRac6</fullName>
    </alternativeName>
</protein>
<proteinExistence type="evidence at transcript level"/>
<evidence type="ECO:0000250" key="1"/>
<evidence type="ECO:0000255" key="2"/>
<evidence type="ECO:0000305" key="3"/>
<evidence type="ECO:0000312" key="4">
    <source>
        <dbReference type="EMBL" id="EEE56200.1"/>
    </source>
</evidence>
<gene>
    <name type="primary">RAC6</name>
    <name type="synonym">RACB</name>
    <name type="ordered locus">Os02g0120800</name>
    <name type="ordered locus">LOC_Os02g02840</name>
    <name type="ORF">OJ1020_C02.8</name>
    <name evidence="4" type="ORF">OsJ_05161</name>
    <name type="ORF">OSJNBb0088N06.17</name>
</gene>
<keyword id="KW-0963">Cytoplasm</keyword>
<keyword id="KW-0342">GTP-binding</keyword>
<keyword id="KW-0449">Lipoprotein</keyword>
<keyword id="KW-0472">Membrane</keyword>
<keyword id="KW-0488">Methylation</keyword>
<keyword id="KW-0547">Nucleotide-binding</keyword>
<keyword id="KW-0636">Prenylation</keyword>
<keyword id="KW-1185">Reference proteome</keyword>
<accession>Q6ZHA3</accession>
<accession>Q0E4G2</accession>
<accession>Q9LKX7</accession>
<reference key="1">
    <citation type="submission" date="2002-01" db="EMBL/GenBank/DDBJ databases">
        <title>Molecular cloning of Rac gene from rice (Oryza sativa L. japonica).</title>
        <authorList>
            <person name="Mi Z."/>
            <person name="Luo M."/>
            <person name="Wu N."/>
        </authorList>
    </citation>
    <scope>NUCLEOTIDE SEQUENCE [MRNA]</scope>
</reference>
<reference key="2">
    <citation type="submission" date="2004-03" db="EMBL/GenBank/DDBJ databases">
        <title>A novel GTPase OsRacB from Oryza sativa: molecular cloning, regulation and its over-expression confer tolerance in transgenic rice under stress.</title>
        <authorList>
            <person name="Luo M."/>
            <person name="Mi Z.-Y."/>
            <person name="Wu N.-H."/>
            <person name="Gu S.-H."/>
            <person name="Zhao S.-H."/>
            <person name="Tang C.-R."/>
        </authorList>
    </citation>
    <scope>NUCLEOTIDE SEQUENCE [GENOMIC DNA]</scope>
</reference>
<reference key="3">
    <citation type="journal article" date="2005" name="Nature">
        <title>The map-based sequence of the rice genome.</title>
        <authorList>
            <consortium name="International rice genome sequencing project (IRGSP)"/>
        </authorList>
    </citation>
    <scope>NUCLEOTIDE SEQUENCE [LARGE SCALE GENOMIC DNA]</scope>
    <source>
        <strain>cv. Nipponbare</strain>
    </source>
</reference>
<reference key="4">
    <citation type="journal article" date="2008" name="Nucleic Acids Res.">
        <title>The rice annotation project database (RAP-DB): 2008 update.</title>
        <authorList>
            <consortium name="The rice annotation project (RAP)"/>
        </authorList>
    </citation>
    <scope>GENOME REANNOTATION</scope>
    <source>
        <strain>cv. Nipponbare</strain>
    </source>
</reference>
<reference key="5">
    <citation type="journal article" date="2013" name="Rice">
        <title>Improvement of the Oryza sativa Nipponbare reference genome using next generation sequence and optical map data.</title>
        <authorList>
            <person name="Kawahara Y."/>
            <person name="de la Bastide M."/>
            <person name="Hamilton J.P."/>
            <person name="Kanamori H."/>
            <person name="McCombie W.R."/>
            <person name="Ouyang S."/>
            <person name="Schwartz D.C."/>
            <person name="Tanaka T."/>
            <person name="Wu J."/>
            <person name="Zhou S."/>
            <person name="Childs K.L."/>
            <person name="Davidson R.M."/>
            <person name="Lin H."/>
            <person name="Quesada-Ocampo L."/>
            <person name="Vaillancourt B."/>
            <person name="Sakai H."/>
            <person name="Lee S.S."/>
            <person name="Kim J."/>
            <person name="Numa H."/>
            <person name="Itoh T."/>
            <person name="Buell C.R."/>
            <person name="Matsumoto T."/>
        </authorList>
    </citation>
    <scope>GENOME REANNOTATION</scope>
    <source>
        <strain>cv. Nipponbare</strain>
    </source>
</reference>
<reference key="6">
    <citation type="journal article" date="2005" name="PLoS Biol.">
        <title>The genomes of Oryza sativa: a history of duplications.</title>
        <authorList>
            <person name="Yu J."/>
            <person name="Wang J."/>
            <person name="Lin W."/>
            <person name="Li S."/>
            <person name="Li H."/>
            <person name="Zhou J."/>
            <person name="Ni P."/>
            <person name="Dong W."/>
            <person name="Hu S."/>
            <person name="Zeng C."/>
            <person name="Zhang J."/>
            <person name="Zhang Y."/>
            <person name="Li R."/>
            <person name="Xu Z."/>
            <person name="Li S."/>
            <person name="Li X."/>
            <person name="Zheng H."/>
            <person name="Cong L."/>
            <person name="Lin L."/>
            <person name="Yin J."/>
            <person name="Geng J."/>
            <person name="Li G."/>
            <person name="Shi J."/>
            <person name="Liu J."/>
            <person name="Lv H."/>
            <person name="Li J."/>
            <person name="Wang J."/>
            <person name="Deng Y."/>
            <person name="Ran L."/>
            <person name="Shi X."/>
            <person name="Wang X."/>
            <person name="Wu Q."/>
            <person name="Li C."/>
            <person name="Ren X."/>
            <person name="Wang J."/>
            <person name="Wang X."/>
            <person name="Li D."/>
            <person name="Liu D."/>
            <person name="Zhang X."/>
            <person name="Ji Z."/>
            <person name="Zhao W."/>
            <person name="Sun Y."/>
            <person name="Zhang Z."/>
            <person name="Bao J."/>
            <person name="Han Y."/>
            <person name="Dong L."/>
            <person name="Ji J."/>
            <person name="Chen P."/>
            <person name="Wu S."/>
            <person name="Liu J."/>
            <person name="Xiao Y."/>
            <person name="Bu D."/>
            <person name="Tan J."/>
            <person name="Yang L."/>
            <person name="Ye C."/>
            <person name="Zhang J."/>
            <person name="Xu J."/>
            <person name="Zhou Y."/>
            <person name="Yu Y."/>
            <person name="Zhang B."/>
            <person name="Zhuang S."/>
            <person name="Wei H."/>
            <person name="Liu B."/>
            <person name="Lei M."/>
            <person name="Yu H."/>
            <person name="Li Y."/>
            <person name="Xu H."/>
            <person name="Wei S."/>
            <person name="He X."/>
            <person name="Fang L."/>
            <person name="Zhang Z."/>
            <person name="Zhang Y."/>
            <person name="Huang X."/>
            <person name="Su Z."/>
            <person name="Tong W."/>
            <person name="Li J."/>
            <person name="Tong Z."/>
            <person name="Li S."/>
            <person name="Ye J."/>
            <person name="Wang L."/>
            <person name="Fang L."/>
            <person name="Lei T."/>
            <person name="Chen C.-S."/>
            <person name="Chen H.-C."/>
            <person name="Xu Z."/>
            <person name="Li H."/>
            <person name="Huang H."/>
            <person name="Zhang F."/>
            <person name="Xu H."/>
            <person name="Li N."/>
            <person name="Zhao C."/>
            <person name="Li S."/>
            <person name="Dong L."/>
            <person name="Huang Y."/>
            <person name="Li L."/>
            <person name="Xi Y."/>
            <person name="Qi Q."/>
            <person name="Li W."/>
            <person name="Zhang B."/>
            <person name="Hu W."/>
            <person name="Zhang Y."/>
            <person name="Tian X."/>
            <person name="Jiao Y."/>
            <person name="Liang X."/>
            <person name="Jin J."/>
            <person name="Gao L."/>
            <person name="Zheng W."/>
            <person name="Hao B."/>
            <person name="Liu S.-M."/>
            <person name="Wang W."/>
            <person name="Yuan L."/>
            <person name="Cao M."/>
            <person name="McDermott J."/>
            <person name="Samudrala R."/>
            <person name="Wang J."/>
            <person name="Wong G.K.-S."/>
            <person name="Yang H."/>
        </authorList>
    </citation>
    <scope>NUCLEOTIDE SEQUENCE [LARGE SCALE GENOMIC DNA]</scope>
    <source>
        <strain>cv. Nipponbare</strain>
    </source>
</reference>
<reference key="7">
    <citation type="journal article" date="2003" name="Science">
        <title>Collection, mapping, and annotation of over 28,000 cDNA clones from japonica rice.</title>
        <authorList>
            <consortium name="The rice full-length cDNA consortium"/>
        </authorList>
    </citation>
    <scope>NUCLEOTIDE SEQUENCE [LARGE SCALE MRNA]</scope>
    <source>
        <strain>cv. Nipponbare</strain>
    </source>
</reference>
<reference key="8">
    <citation type="journal article" date="2005" name="Plant Physiol.">
        <title>RNA silencing of single and multiple members in a gene family of rice.</title>
        <authorList>
            <person name="Miki D."/>
            <person name="Itoh R."/>
            <person name="Shimamoto K."/>
        </authorList>
    </citation>
    <scope>NOMENCLATURE</scope>
</reference>
<dbReference type="EMBL" id="AF250327">
    <property type="protein sequence ID" value="AAF91343.1"/>
    <property type="molecule type" value="mRNA"/>
</dbReference>
<dbReference type="EMBL" id="AY579208">
    <property type="protein sequence ID" value="AAT84075.1"/>
    <property type="molecule type" value="Genomic_DNA"/>
</dbReference>
<dbReference type="EMBL" id="AP004078">
    <property type="protein sequence ID" value="BAD07596.1"/>
    <property type="molecule type" value="Genomic_DNA"/>
</dbReference>
<dbReference type="EMBL" id="AP005851">
    <property type="protein sequence ID" value="BAD08136.1"/>
    <property type="molecule type" value="Genomic_DNA"/>
</dbReference>
<dbReference type="EMBL" id="AP008208">
    <property type="protein sequence ID" value="BAF07626.1"/>
    <property type="molecule type" value="Genomic_DNA"/>
</dbReference>
<dbReference type="EMBL" id="AP014958">
    <property type="protein sequence ID" value="BAS76704.1"/>
    <property type="molecule type" value="Genomic_DNA"/>
</dbReference>
<dbReference type="EMBL" id="CM000139">
    <property type="protein sequence ID" value="EEE56200.1"/>
    <property type="molecule type" value="Genomic_DNA"/>
</dbReference>
<dbReference type="EMBL" id="AK069443">
    <property type="protein sequence ID" value="BAG91434.1"/>
    <property type="molecule type" value="mRNA"/>
</dbReference>
<dbReference type="EMBL" id="AK100842">
    <property type="protein sequence ID" value="BAG94793.1"/>
    <property type="molecule type" value="mRNA"/>
</dbReference>
<dbReference type="RefSeq" id="XP_015625732.1">
    <property type="nucleotide sequence ID" value="XM_015770246.1"/>
</dbReference>
<dbReference type="SMR" id="Q6ZHA3"/>
<dbReference type="FunCoup" id="Q6ZHA3">
    <property type="interactions" value="2294"/>
</dbReference>
<dbReference type="STRING" id="39947.Q6ZHA3"/>
<dbReference type="PaxDb" id="39947-Q6ZHA3"/>
<dbReference type="EnsemblPlants" id="Os02t0120800-01">
    <property type="protein sequence ID" value="Os02t0120800-01"/>
    <property type="gene ID" value="Os02g0120800"/>
</dbReference>
<dbReference type="EnsemblPlants" id="Os02t0120800-02">
    <property type="protein sequence ID" value="Os02t0120800-02"/>
    <property type="gene ID" value="Os02g0120800"/>
</dbReference>
<dbReference type="Gramene" id="Os02t0120800-01">
    <property type="protein sequence ID" value="Os02t0120800-01"/>
    <property type="gene ID" value="Os02g0120800"/>
</dbReference>
<dbReference type="Gramene" id="Os02t0120800-02">
    <property type="protein sequence ID" value="Os02t0120800-02"/>
    <property type="gene ID" value="Os02g0120800"/>
</dbReference>
<dbReference type="KEGG" id="dosa:Os02g0120800"/>
<dbReference type="eggNOG" id="KOG0393">
    <property type="taxonomic scope" value="Eukaryota"/>
</dbReference>
<dbReference type="HOGENOM" id="CLU_041217_21_3_1"/>
<dbReference type="InParanoid" id="Q6ZHA3"/>
<dbReference type="OMA" id="WAPEITH"/>
<dbReference type="OrthoDB" id="8830751at2759"/>
<dbReference type="PlantReactome" id="R-OSA-5608118">
    <property type="pathway name" value="Auxin signalling"/>
</dbReference>
<dbReference type="Proteomes" id="UP000000763">
    <property type="component" value="Chromosome 2"/>
</dbReference>
<dbReference type="Proteomes" id="UP000007752">
    <property type="component" value="Chromosome 2"/>
</dbReference>
<dbReference type="Proteomes" id="UP000059680">
    <property type="component" value="Chromosome 2"/>
</dbReference>
<dbReference type="GO" id="GO:0042995">
    <property type="term" value="C:cell projection"/>
    <property type="evidence" value="ECO:0000318"/>
    <property type="project" value="GO_Central"/>
</dbReference>
<dbReference type="GO" id="GO:0031410">
    <property type="term" value="C:cytoplasmic vesicle"/>
    <property type="evidence" value="ECO:0000318"/>
    <property type="project" value="GO_Central"/>
</dbReference>
<dbReference type="GO" id="GO:0005856">
    <property type="term" value="C:cytoskeleton"/>
    <property type="evidence" value="ECO:0000318"/>
    <property type="project" value="GO_Central"/>
</dbReference>
<dbReference type="GO" id="GO:0005886">
    <property type="term" value="C:plasma membrane"/>
    <property type="evidence" value="ECO:0000314"/>
    <property type="project" value="CACAO"/>
</dbReference>
<dbReference type="GO" id="GO:0005525">
    <property type="term" value="F:GTP binding"/>
    <property type="evidence" value="ECO:0000318"/>
    <property type="project" value="GO_Central"/>
</dbReference>
<dbReference type="GO" id="GO:0003924">
    <property type="term" value="F:GTPase activity"/>
    <property type="evidence" value="ECO:0000318"/>
    <property type="project" value="GO_Central"/>
</dbReference>
<dbReference type="GO" id="GO:0019901">
    <property type="term" value="F:protein kinase binding"/>
    <property type="evidence" value="ECO:0000318"/>
    <property type="project" value="GO_Central"/>
</dbReference>
<dbReference type="GO" id="GO:0007015">
    <property type="term" value="P:actin filament organization"/>
    <property type="evidence" value="ECO:0000318"/>
    <property type="project" value="GO_Central"/>
</dbReference>
<dbReference type="GO" id="GO:0030865">
    <property type="term" value="P:cortical cytoskeleton organization"/>
    <property type="evidence" value="ECO:0000318"/>
    <property type="project" value="GO_Central"/>
</dbReference>
<dbReference type="GO" id="GO:0007163">
    <property type="term" value="P:establishment or maintenance of cell polarity"/>
    <property type="evidence" value="ECO:0000318"/>
    <property type="project" value="GO_Central"/>
</dbReference>
<dbReference type="GO" id="GO:0032956">
    <property type="term" value="P:regulation of actin cytoskeleton organization"/>
    <property type="evidence" value="ECO:0000318"/>
    <property type="project" value="GO_Central"/>
</dbReference>
<dbReference type="GO" id="GO:0008360">
    <property type="term" value="P:regulation of cell shape"/>
    <property type="evidence" value="ECO:0000318"/>
    <property type="project" value="GO_Central"/>
</dbReference>
<dbReference type="GO" id="GO:0007165">
    <property type="term" value="P:signal transduction"/>
    <property type="evidence" value="ECO:0000318"/>
    <property type="project" value="GO_Central"/>
</dbReference>
<dbReference type="GO" id="GO:0007264">
    <property type="term" value="P:small GTPase-mediated signal transduction"/>
    <property type="evidence" value="ECO:0007669"/>
    <property type="project" value="InterPro"/>
</dbReference>
<dbReference type="CDD" id="cd04133">
    <property type="entry name" value="Rop_like"/>
    <property type="match status" value="1"/>
</dbReference>
<dbReference type="FunFam" id="3.40.50.300:FF:000336">
    <property type="entry name" value="rac-like GTP-binding protein RHO1"/>
    <property type="match status" value="1"/>
</dbReference>
<dbReference type="Gene3D" id="3.40.50.300">
    <property type="entry name" value="P-loop containing nucleotide triphosphate hydrolases"/>
    <property type="match status" value="1"/>
</dbReference>
<dbReference type="InterPro" id="IPR027417">
    <property type="entry name" value="P-loop_NTPase"/>
</dbReference>
<dbReference type="InterPro" id="IPR005225">
    <property type="entry name" value="Small_GTP-bd"/>
</dbReference>
<dbReference type="InterPro" id="IPR001806">
    <property type="entry name" value="Small_GTPase"/>
</dbReference>
<dbReference type="InterPro" id="IPR003578">
    <property type="entry name" value="Small_GTPase_Rho"/>
</dbReference>
<dbReference type="NCBIfam" id="TIGR00231">
    <property type="entry name" value="small_GTP"/>
    <property type="match status" value="1"/>
</dbReference>
<dbReference type="PANTHER" id="PTHR24072">
    <property type="entry name" value="RHO FAMILY GTPASE"/>
    <property type="match status" value="1"/>
</dbReference>
<dbReference type="Pfam" id="PF00071">
    <property type="entry name" value="Ras"/>
    <property type="match status" value="1"/>
</dbReference>
<dbReference type="PRINTS" id="PR00449">
    <property type="entry name" value="RASTRNSFRMNG"/>
</dbReference>
<dbReference type="SMART" id="SM00175">
    <property type="entry name" value="RAB"/>
    <property type="match status" value="1"/>
</dbReference>
<dbReference type="SMART" id="SM00173">
    <property type="entry name" value="RAS"/>
    <property type="match status" value="1"/>
</dbReference>
<dbReference type="SMART" id="SM00174">
    <property type="entry name" value="RHO"/>
    <property type="match status" value="1"/>
</dbReference>
<dbReference type="SUPFAM" id="SSF52540">
    <property type="entry name" value="P-loop containing nucleoside triphosphate hydrolases"/>
    <property type="match status" value="1"/>
</dbReference>
<dbReference type="PROSITE" id="PS51420">
    <property type="entry name" value="RHO"/>
    <property type="match status" value="1"/>
</dbReference>